<reference key="1">
    <citation type="submission" date="1999-07" db="EMBL/GenBank/DDBJ databases">
        <title>PrP gene sequence for big horn sheep (Ovis canadensis).</title>
        <authorList>
            <person name="O'Rourke K.I."/>
            <person name="Spraker T.R."/>
            <person name="Wild M.A."/>
            <person name="Miller M.W."/>
        </authorList>
    </citation>
    <scope>NUCLEOTIDE SEQUENCE [GENOMIC DNA]</scope>
    <source>
        <tissue>Brain</tissue>
    </source>
</reference>
<proteinExistence type="inferred from homology"/>
<gene>
    <name type="primary">PRNP</name>
    <name type="synonym">PRP</name>
</gene>
<evidence type="ECO:0000250" key="1"/>
<evidence type="ECO:0000250" key="2">
    <source>
        <dbReference type="UniProtKB" id="P04156"/>
    </source>
</evidence>
<evidence type="ECO:0000250" key="3">
    <source>
        <dbReference type="UniProtKB" id="P04273"/>
    </source>
</evidence>
<evidence type="ECO:0000250" key="4">
    <source>
        <dbReference type="UniProtKB" id="P04925"/>
    </source>
</evidence>
<evidence type="ECO:0000255" key="5"/>
<evidence type="ECO:0000256" key="6">
    <source>
        <dbReference type="SAM" id="MobiDB-lite"/>
    </source>
</evidence>
<evidence type="ECO:0000305" key="7"/>
<keyword id="KW-0034">Amyloid</keyword>
<keyword id="KW-1003">Cell membrane</keyword>
<keyword id="KW-0186">Copper</keyword>
<keyword id="KW-1015">Disulfide bond</keyword>
<keyword id="KW-0325">Glycoprotein</keyword>
<keyword id="KW-0333">Golgi apparatus</keyword>
<keyword id="KW-0336">GPI-anchor</keyword>
<keyword id="KW-0449">Lipoprotein</keyword>
<keyword id="KW-0472">Membrane</keyword>
<keyword id="KW-0479">Metal-binding</keyword>
<keyword id="KW-0640">Prion</keyword>
<keyword id="KW-0677">Repeat</keyword>
<keyword id="KW-0732">Signal</keyword>
<keyword id="KW-0862">Zinc</keyword>
<accession>Q7JIH3</accession>
<protein>
    <recommendedName>
        <fullName>Major prion protein</fullName>
        <shortName>PrP</shortName>
    </recommendedName>
    <cdAntigenName>CD230</cdAntigenName>
</protein>
<sequence>MVKSHIGSWILVLFVAMWSDVGLCKKRPKPGGGWNTGGSRYPGQGSPGGNRYPPQGGGGWGQPHGGGWGQPHGGGWGQPHGGGWGQPHGGGGWGQGGSHSQWNKPSKPKTNMKHVAGAAAAGAVVGGLGGYMLGSAMSRPLIHFGNDYEDRYYRENMYRYPNQVYYRPVDQYSNQNNFVHDCVNITVKQHTVTTTTKGENFTETDIKIMERVVEQMCITQYQRESQAYYQRGASVILFSSPPVILLISFLIFLIVG</sequence>
<name>PRIO_OVICA</name>
<organism>
    <name type="scientific">Ovis canadensis</name>
    <name type="common">Bighorn sheep</name>
    <dbReference type="NCBI Taxonomy" id="37174"/>
    <lineage>
        <taxon>Eukaryota</taxon>
        <taxon>Metazoa</taxon>
        <taxon>Chordata</taxon>
        <taxon>Craniata</taxon>
        <taxon>Vertebrata</taxon>
        <taxon>Euteleostomi</taxon>
        <taxon>Mammalia</taxon>
        <taxon>Eutheria</taxon>
        <taxon>Laurasiatheria</taxon>
        <taxon>Artiodactyla</taxon>
        <taxon>Ruminantia</taxon>
        <taxon>Pecora</taxon>
        <taxon>Bovidae</taxon>
        <taxon>Caprinae</taxon>
        <taxon>Ovis</taxon>
    </lineage>
</organism>
<dbReference type="EMBL" id="AF166334">
    <property type="protein sequence ID" value="AAD48030.1"/>
    <property type="molecule type" value="Genomic_DNA"/>
</dbReference>
<dbReference type="RefSeq" id="XP_069404131.1">
    <property type="nucleotide sequence ID" value="XM_069548030.1"/>
</dbReference>
<dbReference type="SMR" id="Q7JIH3"/>
<dbReference type="GlyCosmos" id="Q7JIH3">
    <property type="glycosylation" value="2 sites, No reported glycans"/>
</dbReference>
<dbReference type="GeneID" id="138417549"/>
<dbReference type="GO" id="GO:0005794">
    <property type="term" value="C:Golgi apparatus"/>
    <property type="evidence" value="ECO:0007669"/>
    <property type="project" value="UniProtKB-SubCell"/>
</dbReference>
<dbReference type="GO" id="GO:0005886">
    <property type="term" value="C:plasma membrane"/>
    <property type="evidence" value="ECO:0007669"/>
    <property type="project" value="UniProtKB-SubCell"/>
</dbReference>
<dbReference type="GO" id="GO:0098552">
    <property type="term" value="C:side of membrane"/>
    <property type="evidence" value="ECO:0007669"/>
    <property type="project" value="UniProtKB-KW"/>
</dbReference>
<dbReference type="GO" id="GO:0005507">
    <property type="term" value="F:copper ion binding"/>
    <property type="evidence" value="ECO:0000250"/>
    <property type="project" value="UniProtKB"/>
</dbReference>
<dbReference type="GO" id="GO:0051260">
    <property type="term" value="P:protein homooligomerization"/>
    <property type="evidence" value="ECO:0007669"/>
    <property type="project" value="InterPro"/>
</dbReference>
<dbReference type="FunFam" id="1.10.790.10:FF:000001">
    <property type="entry name" value="Major prion protein"/>
    <property type="match status" value="1"/>
</dbReference>
<dbReference type="Gene3D" id="1.10.790.10">
    <property type="entry name" value="Prion/Doppel protein, beta-ribbon domain"/>
    <property type="match status" value="1"/>
</dbReference>
<dbReference type="InterPro" id="IPR000817">
    <property type="entry name" value="Prion"/>
</dbReference>
<dbReference type="InterPro" id="IPR036924">
    <property type="entry name" value="Prion/Doppel_b-ribbon_dom_sf"/>
</dbReference>
<dbReference type="InterPro" id="IPR022416">
    <property type="entry name" value="Prion/Doppel_prot_b-ribbon_dom"/>
</dbReference>
<dbReference type="InterPro" id="IPR020949">
    <property type="entry name" value="Prion_copper_b_octapeptide"/>
</dbReference>
<dbReference type="InterPro" id="IPR025860">
    <property type="entry name" value="Prion_N"/>
</dbReference>
<dbReference type="PANTHER" id="PTHR15506">
    <property type="entry name" value="DOPPEL PRION"/>
    <property type="match status" value="1"/>
</dbReference>
<dbReference type="PANTHER" id="PTHR15506:SF2">
    <property type="entry name" value="MAJOR PRION PROTEIN"/>
    <property type="match status" value="1"/>
</dbReference>
<dbReference type="Pfam" id="PF00377">
    <property type="entry name" value="Prion"/>
    <property type="match status" value="1"/>
</dbReference>
<dbReference type="Pfam" id="PF11587">
    <property type="entry name" value="Prion_bPrPp"/>
    <property type="match status" value="1"/>
</dbReference>
<dbReference type="Pfam" id="PF03991">
    <property type="entry name" value="Prion_octapep"/>
    <property type="match status" value="1"/>
</dbReference>
<dbReference type="PRINTS" id="PR00341">
    <property type="entry name" value="PRION"/>
</dbReference>
<dbReference type="SMART" id="SM00157">
    <property type="entry name" value="PRP"/>
    <property type="match status" value="1"/>
</dbReference>
<dbReference type="SUPFAM" id="SSF54098">
    <property type="entry name" value="Prion-like"/>
    <property type="match status" value="1"/>
</dbReference>
<dbReference type="PROSITE" id="PS00291">
    <property type="entry name" value="PRION_1"/>
    <property type="match status" value="1"/>
</dbReference>
<dbReference type="PROSITE" id="PS00706">
    <property type="entry name" value="PRION_2"/>
    <property type="match status" value="1"/>
</dbReference>
<feature type="signal peptide" evidence="1">
    <location>
        <begin position="1"/>
        <end position="24"/>
    </location>
</feature>
<feature type="chain" id="PRO_0000025705" description="Major prion protein">
    <location>
        <begin position="25"/>
        <end position="233"/>
    </location>
</feature>
<feature type="propeptide" id="PRO_0000025706" description="Removed in mature form" evidence="5">
    <location>
        <begin position="234"/>
        <end position="256"/>
    </location>
</feature>
<feature type="repeat" description="1">
    <location>
        <begin position="54"/>
        <end position="62"/>
    </location>
</feature>
<feature type="repeat" description="2">
    <location>
        <begin position="63"/>
        <end position="70"/>
    </location>
</feature>
<feature type="repeat" description="3">
    <location>
        <begin position="71"/>
        <end position="78"/>
    </location>
</feature>
<feature type="repeat" description="4">
    <location>
        <begin position="79"/>
        <end position="86"/>
    </location>
</feature>
<feature type="repeat" description="5">
    <location>
        <begin position="87"/>
        <end position="95"/>
    </location>
</feature>
<feature type="region of interest" description="Interaction with GRB2, ERI3 and SYN1" evidence="4">
    <location>
        <begin position="25"/>
        <end position="233"/>
    </location>
</feature>
<feature type="region of interest" description="Disordered" evidence="6">
    <location>
        <begin position="28"/>
        <end position="110"/>
    </location>
</feature>
<feature type="region of interest" description="5 X 8 AA tandem repeats of P-H-G-G-G-W-G-Q">
    <location>
        <begin position="54"/>
        <end position="95"/>
    </location>
</feature>
<feature type="compositionally biased region" description="Gly residues" evidence="6">
    <location>
        <begin position="55"/>
        <end position="97"/>
    </location>
</feature>
<feature type="binding site" evidence="2">
    <location>
        <position position="64"/>
    </location>
    <ligand>
        <name>Cu(2+)</name>
        <dbReference type="ChEBI" id="CHEBI:29036"/>
        <label>1</label>
    </ligand>
</feature>
<feature type="binding site" evidence="2">
    <location>
        <position position="65"/>
    </location>
    <ligand>
        <name>Cu(2+)</name>
        <dbReference type="ChEBI" id="CHEBI:29036"/>
        <label>1</label>
    </ligand>
</feature>
<feature type="binding site" evidence="2">
    <location>
        <position position="66"/>
    </location>
    <ligand>
        <name>Cu(2+)</name>
        <dbReference type="ChEBI" id="CHEBI:29036"/>
        <label>1</label>
    </ligand>
</feature>
<feature type="binding site" evidence="2">
    <location>
        <position position="72"/>
    </location>
    <ligand>
        <name>Cu(2+)</name>
        <dbReference type="ChEBI" id="CHEBI:29036"/>
        <label>2</label>
    </ligand>
</feature>
<feature type="binding site" evidence="2">
    <location>
        <position position="73"/>
    </location>
    <ligand>
        <name>Cu(2+)</name>
        <dbReference type="ChEBI" id="CHEBI:29036"/>
        <label>2</label>
    </ligand>
</feature>
<feature type="binding site" evidence="2">
    <location>
        <position position="74"/>
    </location>
    <ligand>
        <name>Cu(2+)</name>
        <dbReference type="ChEBI" id="CHEBI:29036"/>
        <label>2</label>
    </ligand>
</feature>
<feature type="binding site" evidence="2">
    <location>
        <position position="80"/>
    </location>
    <ligand>
        <name>Cu(2+)</name>
        <dbReference type="ChEBI" id="CHEBI:29036"/>
        <label>3</label>
    </ligand>
</feature>
<feature type="binding site" evidence="2">
    <location>
        <position position="81"/>
    </location>
    <ligand>
        <name>Cu(2+)</name>
        <dbReference type="ChEBI" id="CHEBI:29036"/>
        <label>3</label>
    </ligand>
</feature>
<feature type="binding site" evidence="2">
    <location>
        <position position="82"/>
    </location>
    <ligand>
        <name>Cu(2+)</name>
        <dbReference type="ChEBI" id="CHEBI:29036"/>
        <label>3</label>
    </ligand>
</feature>
<feature type="binding site" evidence="2">
    <location>
        <position position="88"/>
    </location>
    <ligand>
        <name>Cu(2+)</name>
        <dbReference type="ChEBI" id="CHEBI:29036"/>
        <label>4</label>
    </ligand>
</feature>
<feature type="binding site" evidence="2">
    <location>
        <position position="90"/>
    </location>
    <ligand>
        <name>Cu(2+)</name>
        <dbReference type="ChEBI" id="CHEBI:29036"/>
        <label>4</label>
    </ligand>
</feature>
<feature type="binding site" evidence="2">
    <location>
        <position position="91"/>
    </location>
    <ligand>
        <name>Cu(2+)</name>
        <dbReference type="ChEBI" id="CHEBI:29036"/>
        <label>4</label>
    </ligand>
</feature>
<feature type="lipid moiety-binding region" description="GPI-anchor amidated alanine" evidence="5">
    <location>
        <position position="233"/>
    </location>
</feature>
<feature type="glycosylation site" description="N-linked (GlcNAc...) asparagine" evidence="7">
    <location>
        <position position="184"/>
    </location>
</feature>
<feature type="glycosylation site" description="N-linked (GlcNAc...) asparagine" evidence="7">
    <location>
        <position position="200"/>
    </location>
</feature>
<feature type="disulfide bond" evidence="3">
    <location>
        <begin position="182"/>
        <end position="217"/>
    </location>
</feature>
<comment type="function">
    <text evidence="2 4">Its primary physiological function is unclear. Has cytoprotective activity against internal or environmental stresses. May play a role in neuronal development and synaptic plasticity. May be required for neuronal myelin sheath maintenance. May play a role in iron uptake and iron homeostasis. Soluble oligomers are toxic to cultured neuroblastoma cells and induce apoptosis (in vitro). Association with GPC1 (via its heparan sulfate chains) targets PRNP to lipid rafts. Also provides Cu(2+) or Zn(2+) for the ascorbate-mediated GPC1 deaminase degradation of its heparan sulfate side chains (By similarity).</text>
</comment>
<comment type="subunit">
    <text evidence="2 4">Monomer and homodimer. Has a tendency to aggregate into amyloid fibrils containing a cross-beta spine, formed by a steric zipper of superposed beta-strands. Soluble oligomers may represent an intermediate stage on the path to fibril formation. Copper binding may promote oligomerization. Interacts with GRB2, APP, ERI3/PRNPIP and SYN1. Mislocalized cytosolically exposed PrP interacts with MGRN1; this interaction alters MGRN1 subcellular location and causes lysosomal enlargement. Interacts with KIAA1191.</text>
</comment>
<comment type="subcellular location">
    <subcellularLocation>
        <location evidence="2">Cell membrane</location>
        <topology evidence="2">Lipid-anchor</topology>
        <topology evidence="2">GPI-anchor</topology>
    </subcellularLocation>
    <subcellularLocation>
        <location evidence="4">Golgi apparatus</location>
    </subcellularLocation>
    <text evidence="2">Targeted to lipid rafts via association with the heparan sulfate chains of GPC1. Colocates, in the presence of Cu(2+), to vesicles in para- and perinuclear regions, where both proteins undergo internalization. Heparin displaces PRNP from lipid rafts and promotes endocytosis.</text>
</comment>
<comment type="domain">
    <text evidence="2">The normal, monomeric form has a mainly alpha-helical structure. The disease-associated, protease-resistant form forms amyloid fibrils containing a cross-beta spine, formed by a steric zipper of superposed beta-strands. Disease mutations may favor intermolecular contacts via short beta strands, and may thereby trigger oligomerization.</text>
</comment>
<comment type="domain">
    <text evidence="2">Contains an N-terminal region composed of octamer repeats. At low copper concentrations, the sidechains of His residues from three or four repeats contribute to the binding of a single copper ion. Alternatively, a copper ion can be bound by interaction with the sidechain and backbone amide nitrogen of a single His residue. The observed copper binding stoichiometry suggests that two repeat regions cooperate to stabilize the binding of a single copper ion. At higher copper concentrations, each octamer can bind one copper ion by interactions with the His sidechain and Gly backbone atoms. A mixture of binding types may occur, especially in the case of octamer repeat expansion. Copper binding may stabilize the conformation of this region and may promote oligomerization.</text>
</comment>
<comment type="disease">
    <text evidence="7">Found in high quantity in the brain of humans and animals infected with degenerative neurological diseases such as kuru, Creutzfeldt-Jakob disease (CJD), Gerstmann-Straussler syndrome (GSS), scrapie, bovine spongiform encephalopathy (BSE), transmissible mink encephalopathy (TME), etc.</text>
</comment>
<comment type="similarity">
    <text evidence="7">Belongs to the prion family.</text>
</comment>